<evidence type="ECO:0000250" key="1"/>
<evidence type="ECO:0000305" key="2"/>
<sequence>MAEVKLLGFWYSPFSHRVEWALKIKGVKYEYIEEDRDNKSSLLLQSNPVYKKVPVLIHNGKPIVESMIILEYIDETFEGPSILPKDPYDRALARFWAKFLDDKVAAVVNTFFRKGEEQEKGKEEVYEMLKVLDNELKDKKFFAGDKFGFADIAANLVGFWLGVFEEGYGDVLVKSEKFPNFSKWRDEYINCSQVNESLPPRDELLAFFRARFQAVVASRSAPK</sequence>
<reference key="1">
    <citation type="journal article" date="1991" name="Plant Mol. Biol.">
        <title>Promoters of auxin-induced genes from tobacco can lead to auxin-inducible and root tip-specific expression.</title>
        <authorList>
            <person name="van der Zaal E.J."/>
            <person name="Droog F.N.J."/>
            <person name="Boot C.J.M."/>
            <person name="Hensgens L.A.M."/>
            <person name="Hoge J.H.C."/>
            <person name="Schilperoort R.A."/>
            <person name="Libbenga K.R."/>
        </authorList>
    </citation>
    <scope>NUCLEOTIDE SEQUENCE [GENOMIC DNA / MRNA]</scope>
    <source>
        <strain>cv. Samsun NN</strain>
        <strain>cv. White Burley</strain>
        <tissue>Leaf</tissue>
    </source>
</reference>
<dbReference type="EC" id="2.5.1.18"/>
<dbReference type="EMBL" id="X56269">
    <property type="protein sequence ID" value="CAA39710.1"/>
    <property type="molecule type" value="Genomic_DNA"/>
</dbReference>
<dbReference type="EMBL" id="X56265">
    <property type="protein sequence ID" value="CAA39706.1"/>
    <property type="molecule type" value="mRNA"/>
</dbReference>
<dbReference type="PIR" id="S16268">
    <property type="entry name" value="S16268"/>
</dbReference>
<dbReference type="RefSeq" id="NP_001312621.1">
    <property type="nucleotide sequence ID" value="NM_001325692.1"/>
</dbReference>
<dbReference type="SMR" id="Q03663"/>
<dbReference type="STRING" id="4097.Q03663"/>
<dbReference type="PaxDb" id="4097-Q03663"/>
<dbReference type="GeneID" id="107800866"/>
<dbReference type="KEGG" id="nta:107800866"/>
<dbReference type="OrthoDB" id="4951845at2759"/>
<dbReference type="Proteomes" id="UP000084051">
    <property type="component" value="Unplaced"/>
</dbReference>
<dbReference type="GO" id="GO:0005737">
    <property type="term" value="C:cytoplasm"/>
    <property type="evidence" value="ECO:0000318"/>
    <property type="project" value="GO_Central"/>
</dbReference>
<dbReference type="GO" id="GO:0004364">
    <property type="term" value="F:glutathione transferase activity"/>
    <property type="evidence" value="ECO:0000318"/>
    <property type="project" value="GO_Central"/>
</dbReference>
<dbReference type="GO" id="GO:0009734">
    <property type="term" value="P:auxin-activated signaling pathway"/>
    <property type="evidence" value="ECO:0007669"/>
    <property type="project" value="UniProtKB-KW"/>
</dbReference>
<dbReference type="GO" id="GO:0006749">
    <property type="term" value="P:glutathione metabolic process"/>
    <property type="evidence" value="ECO:0000318"/>
    <property type="project" value="GO_Central"/>
</dbReference>
<dbReference type="CDD" id="cd03185">
    <property type="entry name" value="GST_C_Tau"/>
    <property type="match status" value="1"/>
</dbReference>
<dbReference type="CDD" id="cd03058">
    <property type="entry name" value="GST_N_Tau"/>
    <property type="match status" value="1"/>
</dbReference>
<dbReference type="FunFam" id="1.20.1050.10:FF:000012">
    <property type="entry name" value="Tau class glutathione S-transferase"/>
    <property type="match status" value="1"/>
</dbReference>
<dbReference type="FunFam" id="3.40.30.10:FF:000014">
    <property type="entry name" value="Tau class glutathione S-transferase"/>
    <property type="match status" value="1"/>
</dbReference>
<dbReference type="Gene3D" id="1.20.1050.10">
    <property type="match status" value="1"/>
</dbReference>
<dbReference type="Gene3D" id="3.40.30.10">
    <property type="entry name" value="Glutaredoxin"/>
    <property type="match status" value="1"/>
</dbReference>
<dbReference type="InterPro" id="IPR010987">
    <property type="entry name" value="Glutathione-S-Trfase_C-like"/>
</dbReference>
<dbReference type="InterPro" id="IPR036282">
    <property type="entry name" value="Glutathione-S-Trfase_C_sf"/>
</dbReference>
<dbReference type="InterPro" id="IPR040079">
    <property type="entry name" value="Glutathione_S-Trfase"/>
</dbReference>
<dbReference type="InterPro" id="IPR004045">
    <property type="entry name" value="Glutathione_S-Trfase_N"/>
</dbReference>
<dbReference type="InterPro" id="IPR004046">
    <property type="entry name" value="GST_C"/>
</dbReference>
<dbReference type="InterPro" id="IPR045074">
    <property type="entry name" value="GST_C_Tau"/>
</dbReference>
<dbReference type="InterPro" id="IPR045073">
    <property type="entry name" value="Omega/Tau-like"/>
</dbReference>
<dbReference type="InterPro" id="IPR036249">
    <property type="entry name" value="Thioredoxin-like_sf"/>
</dbReference>
<dbReference type="PANTHER" id="PTHR11260">
    <property type="entry name" value="GLUTATHIONE S-TRANSFERASE, GST, SUPERFAMILY, GST DOMAIN CONTAINING"/>
    <property type="match status" value="1"/>
</dbReference>
<dbReference type="PANTHER" id="PTHR11260:SF610">
    <property type="entry name" value="GLUTATHIONE S-TRANSFERASE-RELATED"/>
    <property type="match status" value="1"/>
</dbReference>
<dbReference type="Pfam" id="PF00043">
    <property type="entry name" value="GST_C"/>
    <property type="match status" value="1"/>
</dbReference>
<dbReference type="Pfam" id="PF02798">
    <property type="entry name" value="GST_N"/>
    <property type="match status" value="1"/>
</dbReference>
<dbReference type="SFLD" id="SFLDS00019">
    <property type="entry name" value="Glutathione_Transferase_(cytos"/>
    <property type="match status" value="1"/>
</dbReference>
<dbReference type="SFLD" id="SFLDG01152">
    <property type="entry name" value="Main.3:_Omega-_and_Tau-like"/>
    <property type="match status" value="1"/>
</dbReference>
<dbReference type="SUPFAM" id="SSF47616">
    <property type="entry name" value="GST C-terminal domain-like"/>
    <property type="match status" value="1"/>
</dbReference>
<dbReference type="SUPFAM" id="SSF52833">
    <property type="entry name" value="Thioredoxin-like"/>
    <property type="match status" value="1"/>
</dbReference>
<dbReference type="PROSITE" id="PS50405">
    <property type="entry name" value="GST_CTER"/>
    <property type="match status" value="1"/>
</dbReference>
<dbReference type="PROSITE" id="PS50404">
    <property type="entry name" value="GST_NTER"/>
    <property type="match status" value="1"/>
</dbReference>
<feature type="chain" id="PRO_0000185867" description="Probable glutathione S-transferase">
    <location>
        <begin position="1"/>
        <end position="223"/>
    </location>
</feature>
<feature type="domain" description="GST N-terminal">
    <location>
        <begin position="2"/>
        <end position="81"/>
    </location>
</feature>
<feature type="domain" description="GST C-terminal">
    <location>
        <begin position="86"/>
        <end position="212"/>
    </location>
</feature>
<feature type="binding site" evidence="1">
    <location>
        <position position="12"/>
    </location>
    <ligand>
        <name>glutathione</name>
        <dbReference type="ChEBI" id="CHEBI:57925"/>
    </ligand>
</feature>
<feature type="binding site" evidence="1">
    <location>
        <position position="39"/>
    </location>
    <ligand>
        <name>glutathione</name>
        <dbReference type="ChEBI" id="CHEBI:57925"/>
    </ligand>
</feature>
<feature type="binding site" evidence="1">
    <location>
        <position position="53"/>
    </location>
    <ligand>
        <name>glutathione</name>
        <dbReference type="ChEBI" id="CHEBI:57925"/>
    </ligand>
</feature>
<feature type="binding site" evidence="1">
    <location>
        <begin position="65"/>
        <end position="66"/>
    </location>
    <ligand>
        <name>glutathione</name>
        <dbReference type="ChEBI" id="CHEBI:57925"/>
    </ligand>
</feature>
<comment type="catalytic activity">
    <reaction>
        <text>RX + glutathione = an S-substituted glutathione + a halide anion + H(+)</text>
        <dbReference type="Rhea" id="RHEA:16437"/>
        <dbReference type="ChEBI" id="CHEBI:15378"/>
        <dbReference type="ChEBI" id="CHEBI:16042"/>
        <dbReference type="ChEBI" id="CHEBI:17792"/>
        <dbReference type="ChEBI" id="CHEBI:57925"/>
        <dbReference type="ChEBI" id="CHEBI:90779"/>
        <dbReference type="EC" id="2.5.1.18"/>
    </reaction>
</comment>
<comment type="tissue specificity">
    <text>Root tip-specific expression.</text>
</comment>
<comment type="induction">
    <text>By auxin.</text>
</comment>
<comment type="similarity">
    <text evidence="2">Belongs to the GST superfamily. HSP26 family.</text>
</comment>
<keyword id="KW-0927">Auxin signaling pathway</keyword>
<keyword id="KW-1185">Reference proteome</keyword>
<keyword id="KW-0808">Transferase</keyword>
<protein>
    <recommendedName>
        <fullName>Probable glutathione S-transferase</fullName>
        <ecNumber>2.5.1.18</ecNumber>
    </recommendedName>
    <alternativeName>
        <fullName>Auxin-induced protein PGNT35/PCNT111</fullName>
    </alternativeName>
</protein>
<accession>Q03663</accession>
<name>GSTX2_TOBAC</name>
<proteinExistence type="evidence at transcript level"/>
<organism>
    <name type="scientific">Nicotiana tabacum</name>
    <name type="common">Common tobacco</name>
    <dbReference type="NCBI Taxonomy" id="4097"/>
    <lineage>
        <taxon>Eukaryota</taxon>
        <taxon>Viridiplantae</taxon>
        <taxon>Streptophyta</taxon>
        <taxon>Embryophyta</taxon>
        <taxon>Tracheophyta</taxon>
        <taxon>Spermatophyta</taxon>
        <taxon>Magnoliopsida</taxon>
        <taxon>eudicotyledons</taxon>
        <taxon>Gunneridae</taxon>
        <taxon>Pentapetalae</taxon>
        <taxon>asterids</taxon>
        <taxon>lamiids</taxon>
        <taxon>Solanales</taxon>
        <taxon>Solanaceae</taxon>
        <taxon>Nicotianoideae</taxon>
        <taxon>Nicotianeae</taxon>
        <taxon>Nicotiana</taxon>
    </lineage>
</organism>